<name>RSMH_RIPO1</name>
<accession>B7K639</accession>
<comment type="function">
    <text evidence="1">Specifically methylates the N4 position of cytidine in position 1402 (C1402) of 16S rRNA.</text>
</comment>
<comment type="catalytic activity">
    <reaction evidence="1">
        <text>cytidine(1402) in 16S rRNA + S-adenosyl-L-methionine = N(4)-methylcytidine(1402) in 16S rRNA + S-adenosyl-L-homocysteine + H(+)</text>
        <dbReference type="Rhea" id="RHEA:42928"/>
        <dbReference type="Rhea" id="RHEA-COMP:10286"/>
        <dbReference type="Rhea" id="RHEA-COMP:10287"/>
        <dbReference type="ChEBI" id="CHEBI:15378"/>
        <dbReference type="ChEBI" id="CHEBI:57856"/>
        <dbReference type="ChEBI" id="CHEBI:59789"/>
        <dbReference type="ChEBI" id="CHEBI:74506"/>
        <dbReference type="ChEBI" id="CHEBI:82748"/>
        <dbReference type="EC" id="2.1.1.199"/>
    </reaction>
</comment>
<comment type="subcellular location">
    <subcellularLocation>
        <location evidence="1">Cytoplasm</location>
    </subcellularLocation>
</comment>
<comment type="similarity">
    <text evidence="1">Belongs to the methyltransferase superfamily. RsmH family.</text>
</comment>
<keyword id="KW-0963">Cytoplasm</keyword>
<keyword id="KW-0489">Methyltransferase</keyword>
<keyword id="KW-1185">Reference proteome</keyword>
<keyword id="KW-0698">rRNA processing</keyword>
<keyword id="KW-0949">S-adenosyl-L-methionine</keyword>
<keyword id="KW-0808">Transferase</keyword>
<proteinExistence type="inferred from homology"/>
<organism>
    <name type="scientific">Rippkaea orientalis (strain PCC 8801 / RF-1)</name>
    <name type="common">Cyanothece sp. (strain PCC 8801)</name>
    <dbReference type="NCBI Taxonomy" id="41431"/>
    <lineage>
        <taxon>Bacteria</taxon>
        <taxon>Bacillati</taxon>
        <taxon>Cyanobacteriota</taxon>
        <taxon>Cyanophyceae</taxon>
        <taxon>Oscillatoriophycideae</taxon>
        <taxon>Chroococcales</taxon>
        <taxon>Aphanothecaceae</taxon>
        <taxon>Rippkaea</taxon>
        <taxon>Rippkaea orientalis</taxon>
    </lineage>
</organism>
<feature type="chain" id="PRO_0000386839" description="Ribosomal RNA small subunit methyltransferase H">
    <location>
        <begin position="1"/>
        <end position="304"/>
    </location>
</feature>
<feature type="binding site" evidence="1">
    <location>
        <begin position="50"/>
        <end position="52"/>
    </location>
    <ligand>
        <name>S-adenosyl-L-methionine</name>
        <dbReference type="ChEBI" id="CHEBI:59789"/>
    </ligand>
</feature>
<feature type="binding site" evidence="1">
    <location>
        <position position="69"/>
    </location>
    <ligand>
        <name>S-adenosyl-L-methionine</name>
        <dbReference type="ChEBI" id="CHEBI:59789"/>
    </ligand>
</feature>
<feature type="binding site" evidence="1">
    <location>
        <position position="97"/>
    </location>
    <ligand>
        <name>S-adenosyl-L-methionine</name>
        <dbReference type="ChEBI" id="CHEBI:59789"/>
    </ligand>
</feature>
<feature type="binding site" evidence="1">
    <location>
        <position position="113"/>
    </location>
    <ligand>
        <name>S-adenosyl-L-methionine</name>
        <dbReference type="ChEBI" id="CHEBI:59789"/>
    </ligand>
</feature>
<feature type="binding site" evidence="1">
    <location>
        <position position="120"/>
    </location>
    <ligand>
        <name>S-adenosyl-L-methionine</name>
        <dbReference type="ChEBI" id="CHEBI:59789"/>
    </ligand>
</feature>
<dbReference type="EC" id="2.1.1.199" evidence="1"/>
<dbReference type="EMBL" id="CP001287">
    <property type="protein sequence ID" value="ACK68092.1"/>
    <property type="molecule type" value="Genomic_DNA"/>
</dbReference>
<dbReference type="RefSeq" id="WP_015957302.1">
    <property type="nucleotide sequence ID" value="NC_011726.1"/>
</dbReference>
<dbReference type="SMR" id="B7K639"/>
<dbReference type="STRING" id="41431.PCC8801_4161"/>
<dbReference type="KEGG" id="cyp:PCC8801_4161"/>
<dbReference type="eggNOG" id="COG0275">
    <property type="taxonomic scope" value="Bacteria"/>
</dbReference>
<dbReference type="HOGENOM" id="CLU_038422_3_0_3"/>
<dbReference type="OrthoDB" id="9806637at2"/>
<dbReference type="Proteomes" id="UP000008204">
    <property type="component" value="Chromosome"/>
</dbReference>
<dbReference type="GO" id="GO:0005737">
    <property type="term" value="C:cytoplasm"/>
    <property type="evidence" value="ECO:0007669"/>
    <property type="project" value="UniProtKB-SubCell"/>
</dbReference>
<dbReference type="GO" id="GO:0071424">
    <property type="term" value="F:rRNA (cytosine-N4-)-methyltransferase activity"/>
    <property type="evidence" value="ECO:0007669"/>
    <property type="project" value="UniProtKB-UniRule"/>
</dbReference>
<dbReference type="GO" id="GO:0070475">
    <property type="term" value="P:rRNA base methylation"/>
    <property type="evidence" value="ECO:0007669"/>
    <property type="project" value="UniProtKB-UniRule"/>
</dbReference>
<dbReference type="CDD" id="cd02440">
    <property type="entry name" value="AdoMet_MTases"/>
    <property type="match status" value="1"/>
</dbReference>
<dbReference type="Gene3D" id="1.10.150.170">
    <property type="entry name" value="Putative methyltransferase TM0872, insert domain"/>
    <property type="match status" value="1"/>
</dbReference>
<dbReference type="Gene3D" id="3.40.50.150">
    <property type="entry name" value="Vaccinia Virus protein VP39"/>
    <property type="match status" value="1"/>
</dbReference>
<dbReference type="HAMAP" id="MF_01007">
    <property type="entry name" value="16SrRNA_methyltr_H"/>
    <property type="match status" value="1"/>
</dbReference>
<dbReference type="InterPro" id="IPR002903">
    <property type="entry name" value="RsmH"/>
</dbReference>
<dbReference type="InterPro" id="IPR023397">
    <property type="entry name" value="SAM-dep_MeTrfase_MraW_recog"/>
</dbReference>
<dbReference type="InterPro" id="IPR029063">
    <property type="entry name" value="SAM-dependent_MTases_sf"/>
</dbReference>
<dbReference type="NCBIfam" id="TIGR00006">
    <property type="entry name" value="16S rRNA (cytosine(1402)-N(4))-methyltransferase RsmH"/>
    <property type="match status" value="1"/>
</dbReference>
<dbReference type="PANTHER" id="PTHR11265:SF0">
    <property type="entry name" value="12S RRNA N4-METHYLCYTIDINE METHYLTRANSFERASE"/>
    <property type="match status" value="1"/>
</dbReference>
<dbReference type="PANTHER" id="PTHR11265">
    <property type="entry name" value="S-ADENOSYL-METHYLTRANSFERASE MRAW"/>
    <property type="match status" value="1"/>
</dbReference>
<dbReference type="Pfam" id="PF01795">
    <property type="entry name" value="Methyltransf_5"/>
    <property type="match status" value="1"/>
</dbReference>
<dbReference type="PIRSF" id="PIRSF004486">
    <property type="entry name" value="MraW"/>
    <property type="match status" value="1"/>
</dbReference>
<dbReference type="SUPFAM" id="SSF81799">
    <property type="entry name" value="Putative methyltransferase TM0872, insert domain"/>
    <property type="match status" value="1"/>
</dbReference>
<dbReference type="SUPFAM" id="SSF53335">
    <property type="entry name" value="S-adenosyl-L-methionine-dependent methyltransferases"/>
    <property type="match status" value="1"/>
</dbReference>
<sequence length="304" mass="34187">MTNSCDRPLITPLEPPNASFIHISVLSQETIAGLNIIPGGHYLDATVGSGGHSRLILATFPDVRITAIDRDSQAIAAAASNLAELGSERLKFWQGNFADYPGKIAEFSGIIADLGVSSPQFDFPERGFSFRHEGALDMRMDQTQSLTAGEIINQWSETALADLFYQYGEERRSRSMAKHIVQQRPFKTTTQLAEAIAQTVPPKYRYGRIHPATRVFQALRIAVNEELSSLERFLDQAPQWLQPGGRIGIISFHSLEDRIVKYRFRDSSWLTVMTKKPIIPQREEQLKNPRSRSAKLRLAERHLV</sequence>
<gene>
    <name evidence="1" type="primary">rsmH</name>
    <name type="synonym">mraW</name>
    <name type="ordered locus">PCC8801_4161</name>
</gene>
<reference key="1">
    <citation type="journal article" date="2011" name="MBio">
        <title>Novel metabolic attributes of the genus Cyanothece, comprising a group of unicellular nitrogen-fixing Cyanobacteria.</title>
        <authorList>
            <person name="Bandyopadhyay A."/>
            <person name="Elvitigala T."/>
            <person name="Welsh E."/>
            <person name="Stockel J."/>
            <person name="Liberton M."/>
            <person name="Min H."/>
            <person name="Sherman L.A."/>
            <person name="Pakrasi H.B."/>
        </authorList>
    </citation>
    <scope>NUCLEOTIDE SEQUENCE [LARGE SCALE GENOMIC DNA]</scope>
    <source>
        <strain>PCC 8801 / RF-1</strain>
    </source>
</reference>
<evidence type="ECO:0000255" key="1">
    <source>
        <dbReference type="HAMAP-Rule" id="MF_01007"/>
    </source>
</evidence>
<protein>
    <recommendedName>
        <fullName evidence="1">Ribosomal RNA small subunit methyltransferase H</fullName>
        <ecNumber evidence="1">2.1.1.199</ecNumber>
    </recommendedName>
    <alternativeName>
        <fullName evidence="1">16S rRNA m(4)C1402 methyltransferase</fullName>
    </alternativeName>
    <alternativeName>
        <fullName evidence="1">rRNA (cytosine-N(4)-)-methyltransferase RsmH</fullName>
    </alternativeName>
</protein>